<feature type="chain" id="PRO_0000146250" description="Small ribosomal subunit protein uS12">
    <location>
        <begin position="1"/>
        <end position="137"/>
    </location>
</feature>
<feature type="region of interest" description="Disordered" evidence="2">
    <location>
        <begin position="1"/>
        <end position="26"/>
    </location>
</feature>
<feature type="compositionally biased region" description="Basic residues" evidence="2">
    <location>
        <begin position="9"/>
        <end position="18"/>
    </location>
</feature>
<accession>P66372</accession>
<accession>Q927I3</accession>
<name>RS12_LISMO</name>
<protein>
    <recommendedName>
        <fullName evidence="1">Small ribosomal subunit protein uS12</fullName>
    </recommendedName>
    <alternativeName>
        <fullName evidence="3">30S ribosomal protein S12</fullName>
    </alternativeName>
</protein>
<sequence>MPTINQLVRKPRQSKIKKSTSPALNKGLNSFKRELTDVNSPQKRGVCTRVGTMTPKKPNSALRKYARVRLSNGIEVTAYIPGIGHNLQEHSVVLIRGGRVKDLPGVRYHIVRGALDTAGVENRGQSRSKYGTKKPKK</sequence>
<keyword id="KW-0002">3D-structure</keyword>
<keyword id="KW-1185">Reference proteome</keyword>
<keyword id="KW-0687">Ribonucleoprotein</keyword>
<keyword id="KW-0689">Ribosomal protein</keyword>
<keyword id="KW-0694">RNA-binding</keyword>
<keyword id="KW-0699">rRNA-binding</keyword>
<keyword id="KW-0820">tRNA-binding</keyword>
<organism>
    <name type="scientific">Listeria monocytogenes serovar 1/2a (strain ATCC BAA-679 / EGD-e)</name>
    <dbReference type="NCBI Taxonomy" id="169963"/>
    <lineage>
        <taxon>Bacteria</taxon>
        <taxon>Bacillati</taxon>
        <taxon>Bacillota</taxon>
        <taxon>Bacilli</taxon>
        <taxon>Bacillales</taxon>
        <taxon>Listeriaceae</taxon>
        <taxon>Listeria</taxon>
    </lineage>
</organism>
<proteinExistence type="evidence at protein level"/>
<dbReference type="EMBL" id="AL591984">
    <property type="protein sequence ID" value="CAD00869.1"/>
    <property type="molecule type" value="Genomic_DNA"/>
</dbReference>
<dbReference type="PIR" id="AG1406">
    <property type="entry name" value="AG1406"/>
</dbReference>
<dbReference type="RefSeq" id="NP_466178.1">
    <property type="nucleotide sequence ID" value="NC_003210.1"/>
</dbReference>
<dbReference type="RefSeq" id="WP_003720973.1">
    <property type="nucleotide sequence ID" value="NZ_CP149495.1"/>
</dbReference>
<dbReference type="PDB" id="7NHN">
    <property type="method" value="EM"/>
    <property type="resolution" value="2.90 A"/>
    <property type="chains" value="m=1-137"/>
</dbReference>
<dbReference type="PDBsum" id="7NHN"/>
<dbReference type="EMDB" id="EMD-12334"/>
<dbReference type="SMR" id="P66372"/>
<dbReference type="STRING" id="169963.gene:17595373"/>
<dbReference type="PaxDb" id="169963-lmo2656"/>
<dbReference type="EnsemblBacteria" id="CAD00869">
    <property type="protein sequence ID" value="CAD00869"/>
    <property type="gene ID" value="CAD00869"/>
</dbReference>
<dbReference type="GeneID" id="93240543"/>
<dbReference type="GeneID" id="987164"/>
<dbReference type="KEGG" id="lmo:lmo2656"/>
<dbReference type="PATRIC" id="fig|169963.11.peg.2722"/>
<dbReference type="eggNOG" id="COG0048">
    <property type="taxonomic scope" value="Bacteria"/>
</dbReference>
<dbReference type="HOGENOM" id="CLU_104295_1_2_9"/>
<dbReference type="OrthoDB" id="9802366at2"/>
<dbReference type="PhylomeDB" id="P66372"/>
<dbReference type="BioCyc" id="LMON169963:LMO2656-MONOMER"/>
<dbReference type="Proteomes" id="UP000000817">
    <property type="component" value="Chromosome"/>
</dbReference>
<dbReference type="GO" id="GO:0005840">
    <property type="term" value="C:ribosome"/>
    <property type="evidence" value="ECO:0000318"/>
    <property type="project" value="GO_Central"/>
</dbReference>
<dbReference type="GO" id="GO:0015935">
    <property type="term" value="C:small ribosomal subunit"/>
    <property type="evidence" value="ECO:0007669"/>
    <property type="project" value="InterPro"/>
</dbReference>
<dbReference type="GO" id="GO:0019843">
    <property type="term" value="F:rRNA binding"/>
    <property type="evidence" value="ECO:0007669"/>
    <property type="project" value="UniProtKB-UniRule"/>
</dbReference>
<dbReference type="GO" id="GO:0003735">
    <property type="term" value="F:structural constituent of ribosome"/>
    <property type="evidence" value="ECO:0000318"/>
    <property type="project" value="GO_Central"/>
</dbReference>
<dbReference type="GO" id="GO:0000049">
    <property type="term" value="F:tRNA binding"/>
    <property type="evidence" value="ECO:0007669"/>
    <property type="project" value="UniProtKB-UniRule"/>
</dbReference>
<dbReference type="GO" id="GO:0006412">
    <property type="term" value="P:translation"/>
    <property type="evidence" value="ECO:0000318"/>
    <property type="project" value="GO_Central"/>
</dbReference>
<dbReference type="CDD" id="cd03368">
    <property type="entry name" value="Ribosomal_S12"/>
    <property type="match status" value="1"/>
</dbReference>
<dbReference type="FunFam" id="2.40.50.140:FF:000001">
    <property type="entry name" value="30S ribosomal protein S12"/>
    <property type="match status" value="1"/>
</dbReference>
<dbReference type="Gene3D" id="2.40.50.140">
    <property type="entry name" value="Nucleic acid-binding proteins"/>
    <property type="match status" value="1"/>
</dbReference>
<dbReference type="HAMAP" id="MF_00403_B">
    <property type="entry name" value="Ribosomal_uS12_B"/>
    <property type="match status" value="1"/>
</dbReference>
<dbReference type="InterPro" id="IPR012340">
    <property type="entry name" value="NA-bd_OB-fold"/>
</dbReference>
<dbReference type="InterPro" id="IPR006032">
    <property type="entry name" value="Ribosomal_uS12"/>
</dbReference>
<dbReference type="InterPro" id="IPR005679">
    <property type="entry name" value="Ribosomal_uS12_bac"/>
</dbReference>
<dbReference type="NCBIfam" id="TIGR00981">
    <property type="entry name" value="rpsL_bact"/>
    <property type="match status" value="1"/>
</dbReference>
<dbReference type="PANTHER" id="PTHR11652">
    <property type="entry name" value="30S RIBOSOMAL PROTEIN S12 FAMILY MEMBER"/>
    <property type="match status" value="1"/>
</dbReference>
<dbReference type="Pfam" id="PF00164">
    <property type="entry name" value="Ribosom_S12_S23"/>
    <property type="match status" value="1"/>
</dbReference>
<dbReference type="PIRSF" id="PIRSF002133">
    <property type="entry name" value="Ribosomal_S12/S23"/>
    <property type="match status" value="1"/>
</dbReference>
<dbReference type="PRINTS" id="PR01034">
    <property type="entry name" value="RIBOSOMALS12"/>
</dbReference>
<dbReference type="SUPFAM" id="SSF50249">
    <property type="entry name" value="Nucleic acid-binding proteins"/>
    <property type="match status" value="1"/>
</dbReference>
<dbReference type="PROSITE" id="PS00055">
    <property type="entry name" value="RIBOSOMAL_S12"/>
    <property type="match status" value="1"/>
</dbReference>
<evidence type="ECO:0000255" key="1">
    <source>
        <dbReference type="HAMAP-Rule" id="MF_00403"/>
    </source>
</evidence>
<evidence type="ECO:0000256" key="2">
    <source>
        <dbReference type="SAM" id="MobiDB-lite"/>
    </source>
</evidence>
<evidence type="ECO:0000305" key="3"/>
<gene>
    <name evidence="1" type="primary">rpsL</name>
    <name type="ordered locus">lmo2656</name>
</gene>
<reference key="1">
    <citation type="journal article" date="2001" name="Science">
        <title>Comparative genomics of Listeria species.</title>
        <authorList>
            <person name="Glaser P."/>
            <person name="Frangeul L."/>
            <person name="Buchrieser C."/>
            <person name="Rusniok C."/>
            <person name="Amend A."/>
            <person name="Baquero F."/>
            <person name="Berche P."/>
            <person name="Bloecker H."/>
            <person name="Brandt P."/>
            <person name="Chakraborty T."/>
            <person name="Charbit A."/>
            <person name="Chetouani F."/>
            <person name="Couve E."/>
            <person name="de Daruvar A."/>
            <person name="Dehoux P."/>
            <person name="Domann E."/>
            <person name="Dominguez-Bernal G."/>
            <person name="Duchaud E."/>
            <person name="Durant L."/>
            <person name="Dussurget O."/>
            <person name="Entian K.-D."/>
            <person name="Fsihi H."/>
            <person name="Garcia-del Portillo F."/>
            <person name="Garrido P."/>
            <person name="Gautier L."/>
            <person name="Goebel W."/>
            <person name="Gomez-Lopez N."/>
            <person name="Hain T."/>
            <person name="Hauf J."/>
            <person name="Jackson D."/>
            <person name="Jones L.-M."/>
            <person name="Kaerst U."/>
            <person name="Kreft J."/>
            <person name="Kuhn M."/>
            <person name="Kunst F."/>
            <person name="Kurapkat G."/>
            <person name="Madueno E."/>
            <person name="Maitournam A."/>
            <person name="Mata Vicente J."/>
            <person name="Ng E."/>
            <person name="Nedjari H."/>
            <person name="Nordsiek G."/>
            <person name="Novella S."/>
            <person name="de Pablos B."/>
            <person name="Perez-Diaz J.-C."/>
            <person name="Purcell R."/>
            <person name="Remmel B."/>
            <person name="Rose M."/>
            <person name="Schlueter T."/>
            <person name="Simoes N."/>
            <person name="Tierrez A."/>
            <person name="Vazquez-Boland J.-A."/>
            <person name="Voss H."/>
            <person name="Wehland J."/>
            <person name="Cossart P."/>
        </authorList>
    </citation>
    <scope>NUCLEOTIDE SEQUENCE [LARGE SCALE GENOMIC DNA]</scope>
    <source>
        <strain>ATCC BAA-679 / EGD-e</strain>
    </source>
</reference>
<comment type="function">
    <text evidence="1">With S4 and S5 plays an important role in translational accuracy.</text>
</comment>
<comment type="function">
    <text evidence="1">Interacts with and stabilizes bases of the 16S rRNA that are involved in tRNA selection in the A site and with the mRNA backbone. Located at the interface of the 30S and 50S subunits, it traverses the body of the 30S subunit contacting proteins on the other side and probably holding the rRNA structure together. The combined cluster of proteins S8, S12 and S17 appears to hold together the shoulder and platform of the 30S subunit.</text>
</comment>
<comment type="subunit">
    <text evidence="1">Part of the 30S ribosomal subunit. Contacts proteins S8 and S17. May interact with IF1 in the 30S initiation complex.</text>
</comment>
<comment type="similarity">
    <text evidence="1">Belongs to the universal ribosomal protein uS12 family.</text>
</comment>
<comment type="caution">
    <text evidence="3">Because the enzyme that would modify Asp-102 to 3-methylthioaspartic acid has not been found in the proteome of this organism, that modification is not predicted.</text>
</comment>